<keyword id="KW-0071">Autoinducer synthesis</keyword>
<keyword id="KW-0408">Iron</keyword>
<keyword id="KW-0456">Lyase</keyword>
<keyword id="KW-0479">Metal-binding</keyword>
<keyword id="KW-0673">Quorum sensing</keyword>
<organism>
    <name type="scientific">Haemophilus influenzae (strain 86-028NP)</name>
    <dbReference type="NCBI Taxonomy" id="281310"/>
    <lineage>
        <taxon>Bacteria</taxon>
        <taxon>Pseudomonadati</taxon>
        <taxon>Pseudomonadota</taxon>
        <taxon>Gammaproteobacteria</taxon>
        <taxon>Pasteurellales</taxon>
        <taxon>Pasteurellaceae</taxon>
        <taxon>Haemophilus</taxon>
    </lineage>
</organism>
<accession>Q4QN52</accession>
<evidence type="ECO:0000255" key="1">
    <source>
        <dbReference type="HAMAP-Rule" id="MF_00091"/>
    </source>
</evidence>
<comment type="function">
    <text evidence="1">Involved in the synthesis of autoinducer 2 (AI-2) which is secreted by bacteria and is used to communicate both the cell density and the metabolic potential of the environment. The regulation of gene expression in response to changes in cell density is called quorum sensing. Catalyzes the transformation of S-ribosylhomocysteine (RHC) to homocysteine (HC) and 4,5-dihydroxy-2,3-pentadione (DPD).</text>
</comment>
<comment type="catalytic activity">
    <reaction evidence="1">
        <text>S-(5-deoxy-D-ribos-5-yl)-L-homocysteine = (S)-4,5-dihydroxypentane-2,3-dione + L-homocysteine</text>
        <dbReference type="Rhea" id="RHEA:17753"/>
        <dbReference type="ChEBI" id="CHEBI:29484"/>
        <dbReference type="ChEBI" id="CHEBI:58195"/>
        <dbReference type="ChEBI" id="CHEBI:58199"/>
        <dbReference type="EC" id="4.4.1.21"/>
    </reaction>
</comment>
<comment type="cofactor">
    <cofactor evidence="1">
        <name>Fe cation</name>
        <dbReference type="ChEBI" id="CHEBI:24875"/>
    </cofactor>
    <text evidence="1">Binds 1 Fe cation per subunit.</text>
</comment>
<comment type="subunit">
    <text evidence="1">Homodimer.</text>
</comment>
<comment type="similarity">
    <text evidence="1">Belongs to the LuxS family.</text>
</comment>
<protein>
    <recommendedName>
        <fullName evidence="1">S-ribosylhomocysteine lyase</fullName>
        <ecNumber evidence="1">4.4.1.21</ecNumber>
    </recommendedName>
    <alternativeName>
        <fullName evidence="1">AI-2 synthesis protein</fullName>
    </alternativeName>
    <alternativeName>
        <fullName evidence="1">Autoinducer-2 production protein LuxS</fullName>
    </alternativeName>
</protein>
<proteinExistence type="inferred from homology"/>
<name>LUXS_HAEI8</name>
<sequence>MPLLDSFKVDHTKMNAPAVRIAKTMCTPKGDNITVFDLRFCIPNKEILSPKGIHTLEHLFAGFMRDHLNGDSIEIIDISPMGCRTGFYMSLIGTPNEQEVSEAWLASMQDVLGVQDQASIPELNIYQCGSYTEHSLEDAHEIAKNVIARGIGVNKNEDLSLDNSLLK</sequence>
<dbReference type="EC" id="4.4.1.21" evidence="1"/>
<dbReference type="EMBL" id="CP000057">
    <property type="protein sequence ID" value="AAX87545.1"/>
    <property type="molecule type" value="Genomic_DNA"/>
</dbReference>
<dbReference type="RefSeq" id="WP_011272085.1">
    <property type="nucleotide sequence ID" value="NC_007146.2"/>
</dbReference>
<dbReference type="SMR" id="Q4QN52"/>
<dbReference type="GeneID" id="93219504"/>
<dbReference type="KEGG" id="hit:NTHI0621"/>
<dbReference type="HOGENOM" id="CLU_107531_2_0_6"/>
<dbReference type="Proteomes" id="UP000002525">
    <property type="component" value="Chromosome"/>
</dbReference>
<dbReference type="GO" id="GO:0005506">
    <property type="term" value="F:iron ion binding"/>
    <property type="evidence" value="ECO:0007669"/>
    <property type="project" value="InterPro"/>
</dbReference>
<dbReference type="GO" id="GO:0043768">
    <property type="term" value="F:S-ribosylhomocysteine lyase activity"/>
    <property type="evidence" value="ECO:0007669"/>
    <property type="project" value="UniProtKB-UniRule"/>
</dbReference>
<dbReference type="GO" id="GO:0009372">
    <property type="term" value="P:quorum sensing"/>
    <property type="evidence" value="ECO:0007669"/>
    <property type="project" value="UniProtKB-UniRule"/>
</dbReference>
<dbReference type="Gene3D" id="3.30.1360.80">
    <property type="entry name" value="S-ribosylhomocysteinase (LuxS)"/>
    <property type="match status" value="1"/>
</dbReference>
<dbReference type="HAMAP" id="MF_00091">
    <property type="entry name" value="LuxS"/>
    <property type="match status" value="1"/>
</dbReference>
<dbReference type="InterPro" id="IPR037005">
    <property type="entry name" value="LuxS_sf"/>
</dbReference>
<dbReference type="InterPro" id="IPR011249">
    <property type="entry name" value="Metalloenz_LuxS/M16"/>
</dbReference>
<dbReference type="InterPro" id="IPR003815">
    <property type="entry name" value="S-ribosylhomocysteinase"/>
</dbReference>
<dbReference type="NCBIfam" id="NF002602">
    <property type="entry name" value="PRK02260.1-2"/>
    <property type="match status" value="1"/>
</dbReference>
<dbReference type="PANTHER" id="PTHR35799">
    <property type="entry name" value="S-RIBOSYLHOMOCYSTEINE LYASE"/>
    <property type="match status" value="1"/>
</dbReference>
<dbReference type="PANTHER" id="PTHR35799:SF1">
    <property type="entry name" value="S-RIBOSYLHOMOCYSTEINE LYASE"/>
    <property type="match status" value="1"/>
</dbReference>
<dbReference type="Pfam" id="PF02664">
    <property type="entry name" value="LuxS"/>
    <property type="match status" value="1"/>
</dbReference>
<dbReference type="PIRSF" id="PIRSF006160">
    <property type="entry name" value="AI2"/>
    <property type="match status" value="1"/>
</dbReference>
<dbReference type="PRINTS" id="PR01487">
    <property type="entry name" value="LUXSPROTEIN"/>
</dbReference>
<dbReference type="SUPFAM" id="SSF63411">
    <property type="entry name" value="LuxS/MPP-like metallohydrolase"/>
    <property type="match status" value="1"/>
</dbReference>
<reference key="1">
    <citation type="journal article" date="2005" name="J. Bacteriol.">
        <title>Genomic sequence of an otitis media isolate of nontypeable Haemophilus influenzae: comparative study with H. influenzae serotype d, strain KW20.</title>
        <authorList>
            <person name="Harrison A."/>
            <person name="Dyer D.W."/>
            <person name="Gillaspy A."/>
            <person name="Ray W.C."/>
            <person name="Mungur R."/>
            <person name="Carson M.B."/>
            <person name="Zhong H."/>
            <person name="Gipson J."/>
            <person name="Gipson M."/>
            <person name="Johnson L.S."/>
            <person name="Lewis L."/>
            <person name="Bakaletz L.O."/>
            <person name="Munson R.S. Jr."/>
        </authorList>
    </citation>
    <scope>NUCLEOTIDE SEQUENCE [LARGE SCALE GENOMIC DNA]</scope>
    <source>
        <strain>86-028NP</strain>
    </source>
</reference>
<gene>
    <name evidence="1" type="primary">luxS</name>
    <name type="ordered locus">NTHI0621</name>
</gene>
<feature type="chain" id="PRO_0000297999" description="S-ribosylhomocysteine lyase">
    <location>
        <begin position="1"/>
        <end position="167"/>
    </location>
</feature>
<feature type="binding site" evidence="1">
    <location>
        <position position="54"/>
    </location>
    <ligand>
        <name>Fe cation</name>
        <dbReference type="ChEBI" id="CHEBI:24875"/>
    </ligand>
</feature>
<feature type="binding site" evidence="1">
    <location>
        <position position="58"/>
    </location>
    <ligand>
        <name>Fe cation</name>
        <dbReference type="ChEBI" id="CHEBI:24875"/>
    </ligand>
</feature>
<feature type="binding site" evidence="1">
    <location>
        <position position="128"/>
    </location>
    <ligand>
        <name>Fe cation</name>
        <dbReference type="ChEBI" id="CHEBI:24875"/>
    </ligand>
</feature>